<reference key="1">
    <citation type="journal article" date="2005" name="Arch. Virol.">
        <title>The complete nucleotide sequence of a Spanish isolate of Citrus psorosis virus: comparative analysis with other ophioviruses.</title>
        <authorList>
            <person name="Martin S."/>
            <person name="Lopez C."/>
            <person name="Garcia M.L."/>
            <person name="Naum-Ongania G."/>
            <person name="Grau O."/>
            <person name="Flores R."/>
            <person name="Moreno P."/>
            <person name="Guerri J."/>
        </authorList>
    </citation>
    <scope>NUCLEOTIDE SEQUENCE [GENOMIC RNA]</scope>
</reference>
<protein>
    <recommendedName>
        <fullName>Uncharacterized 24 kDa protein</fullName>
    </recommendedName>
</protein>
<organism>
    <name type="scientific">Citrus psorosis virus (isolate Spain/P-121)</name>
    <name type="common">CPsV</name>
    <name type="synonym">Citrus ringspot virus</name>
    <dbReference type="NCBI Taxonomy" id="652963"/>
    <lineage>
        <taxon>Viruses</taxon>
        <taxon>Riboviria</taxon>
        <taxon>Orthornavirae</taxon>
        <taxon>Negarnaviricota</taxon>
        <taxon>Haploviricotina</taxon>
        <taxon>Milneviricetes</taxon>
        <taxon>Serpentovirales</taxon>
        <taxon>Aspiviridae</taxon>
        <taxon>Ophiovirus</taxon>
        <taxon>Ophiovirus citri</taxon>
    </lineage>
</organism>
<sequence>MAEYIEVRVENLHKWGLEINMERIEKLSKRLKSIVDEDCIMKTSRIIGIWMFMPEIVQESLKDSPLMTQKAWIIPHEKTYKTIYGKDGIQMAVTQNEEDLFKDSEFFMISRCDSVMLTKNNKTIILNKELLNCNMSEDMLFNMLSCQEQDITEELMKKMKTIISSNPKERLEDKTEEVFWNSTRILNWIQHNDNSRSNSSDNSFRE</sequence>
<proteinExistence type="predicted"/>
<dbReference type="EMBL" id="AY654892">
    <property type="protein sequence ID" value="AAT72908.1"/>
    <property type="molecule type" value="Genomic_DNA"/>
</dbReference>
<dbReference type="RefSeq" id="YP_089662.1">
    <property type="nucleotide sequence ID" value="NC_006314.1"/>
</dbReference>
<dbReference type="SMR" id="Q6DN66"/>
<dbReference type="GeneID" id="3077254"/>
<dbReference type="KEGG" id="vg:3077254"/>
<dbReference type="Proteomes" id="UP000009269">
    <property type="component" value="Genome"/>
</dbReference>
<keyword id="KW-1185">Reference proteome</keyword>
<feature type="chain" id="PRO_0000391481" description="Uncharacterized 24 kDa protein">
    <location>
        <begin position="1"/>
        <end position="206"/>
    </location>
</feature>
<gene>
    <name type="primary">24K</name>
</gene>
<accession>Q6DN66</accession>
<organismHost>
    <name type="scientific">Citrus aurantiifolia</name>
    <name type="common">Key lime</name>
    <name type="synonym">Limonia aurantifolia</name>
    <dbReference type="NCBI Taxonomy" id="159033"/>
</organismHost>
<organismHost>
    <name type="scientific">Citrus limon</name>
    <name type="common">Lemon</name>
    <name type="synonym">Citrus medica var. limon</name>
    <dbReference type="NCBI Taxonomy" id="2708"/>
</organismHost>
<organismHost>
    <name type="scientific">Citrus paradisi</name>
    <name type="common">Grapefruit</name>
    <dbReference type="NCBI Taxonomy" id="37656"/>
</organismHost>
<name>VP24_CPSVP</name>